<feature type="chain" id="PRO_1000019836" description="Serine--tRNA ligase">
    <location>
        <begin position="1"/>
        <end position="424"/>
    </location>
</feature>
<feature type="binding site" evidence="1">
    <location>
        <begin position="230"/>
        <end position="232"/>
    </location>
    <ligand>
        <name>L-serine</name>
        <dbReference type="ChEBI" id="CHEBI:33384"/>
    </ligand>
</feature>
<feature type="binding site" evidence="1">
    <location>
        <begin position="261"/>
        <end position="263"/>
    </location>
    <ligand>
        <name>ATP</name>
        <dbReference type="ChEBI" id="CHEBI:30616"/>
    </ligand>
</feature>
<feature type="binding site" evidence="1">
    <location>
        <position position="284"/>
    </location>
    <ligand>
        <name>L-serine</name>
        <dbReference type="ChEBI" id="CHEBI:33384"/>
    </ligand>
</feature>
<feature type="binding site" evidence="1">
    <location>
        <begin position="348"/>
        <end position="351"/>
    </location>
    <ligand>
        <name>ATP</name>
        <dbReference type="ChEBI" id="CHEBI:30616"/>
    </ligand>
</feature>
<feature type="binding site" evidence="1">
    <location>
        <position position="384"/>
    </location>
    <ligand>
        <name>L-serine</name>
        <dbReference type="ChEBI" id="CHEBI:33384"/>
    </ligand>
</feature>
<keyword id="KW-0030">Aminoacyl-tRNA synthetase</keyword>
<keyword id="KW-0067">ATP-binding</keyword>
<keyword id="KW-0963">Cytoplasm</keyword>
<keyword id="KW-0436">Ligase</keyword>
<keyword id="KW-0547">Nucleotide-binding</keyword>
<keyword id="KW-0648">Protein biosynthesis</keyword>
<keyword id="KW-1185">Reference proteome</keyword>
<organism>
    <name type="scientific">Streptococcus pneumoniae serotype 2 (strain D39 / NCTC 7466)</name>
    <dbReference type="NCBI Taxonomy" id="373153"/>
    <lineage>
        <taxon>Bacteria</taxon>
        <taxon>Bacillati</taxon>
        <taxon>Bacillota</taxon>
        <taxon>Bacilli</taxon>
        <taxon>Lactobacillales</taxon>
        <taxon>Streptococcaceae</taxon>
        <taxon>Streptococcus</taxon>
    </lineage>
</organism>
<reference key="1">
    <citation type="journal article" date="2007" name="J. Bacteriol.">
        <title>Genome sequence of Avery's virulent serotype 2 strain D39 of Streptococcus pneumoniae and comparison with that of unencapsulated laboratory strain R6.</title>
        <authorList>
            <person name="Lanie J.A."/>
            <person name="Ng W.-L."/>
            <person name="Kazmierczak K.M."/>
            <person name="Andrzejewski T.M."/>
            <person name="Davidsen T.M."/>
            <person name="Wayne K.J."/>
            <person name="Tettelin H."/>
            <person name="Glass J.I."/>
            <person name="Winkler M.E."/>
        </authorList>
    </citation>
    <scope>NUCLEOTIDE SEQUENCE [LARGE SCALE GENOMIC DNA]</scope>
    <source>
        <strain>D39 / NCTC 7466</strain>
    </source>
</reference>
<proteinExistence type="inferred from homology"/>
<sequence length="424" mass="47724">MLDIKRIRTDFEAVAEKLATRGVDAAVLNEMKEIDAKRRNILVKVETLKAERNTVSAEIAQAKRNKENTDDKIAAMQNLSAEVKALDAELAEIDAKLTEFTTTLPNIPADSVPVGADEDDNVEVRRWGTPREFDFEPKAHWDLGEDLGILDWERGGKVTGARFLFYKGLGARLERAIYNFMLDEHGKEGYTEVITPYIVNHDSMFGTGQYPKFKEDTFELSDTNFVLIPTAEVPLTNYYRDEILDGKDLPIYFTAMSPSFRSEAGSAGRDTRGLIRLHQFHKVEMVKFAKPEESYEELEKMTANAENILQKLNLPYRVVALSTGDMGFSATKTYDLEVWIPAQNNYREISSCSNTEDFQARRAQIRYRDEADGKVKLLHTLNGSGLAVGRTVAAILENYQNEDGSVTIPEALRPYMGGAEVIKP</sequence>
<dbReference type="EC" id="6.1.1.11" evidence="1"/>
<dbReference type="EMBL" id="CP000410">
    <property type="protein sequence ID" value="ABJ54621.1"/>
    <property type="molecule type" value="Genomic_DNA"/>
</dbReference>
<dbReference type="RefSeq" id="WP_000884256.1">
    <property type="nucleotide sequence ID" value="NZ_JAMLJR010000009.1"/>
</dbReference>
<dbReference type="SMR" id="Q04M63"/>
<dbReference type="PaxDb" id="373153-SPD_0375"/>
<dbReference type="KEGG" id="spd:SPD_0375"/>
<dbReference type="eggNOG" id="COG0172">
    <property type="taxonomic scope" value="Bacteria"/>
</dbReference>
<dbReference type="HOGENOM" id="CLU_023797_1_1_9"/>
<dbReference type="BioCyc" id="SPNE373153:G1G6V-412-MONOMER"/>
<dbReference type="UniPathway" id="UPA00906">
    <property type="reaction ID" value="UER00895"/>
</dbReference>
<dbReference type="Proteomes" id="UP000001452">
    <property type="component" value="Chromosome"/>
</dbReference>
<dbReference type="GO" id="GO:0005737">
    <property type="term" value="C:cytoplasm"/>
    <property type="evidence" value="ECO:0007669"/>
    <property type="project" value="UniProtKB-SubCell"/>
</dbReference>
<dbReference type="GO" id="GO:0005524">
    <property type="term" value="F:ATP binding"/>
    <property type="evidence" value="ECO:0007669"/>
    <property type="project" value="UniProtKB-UniRule"/>
</dbReference>
<dbReference type="GO" id="GO:0140096">
    <property type="term" value="F:catalytic activity, acting on a protein"/>
    <property type="evidence" value="ECO:0007669"/>
    <property type="project" value="UniProtKB-ARBA"/>
</dbReference>
<dbReference type="GO" id="GO:0004828">
    <property type="term" value="F:serine-tRNA ligase activity"/>
    <property type="evidence" value="ECO:0007669"/>
    <property type="project" value="UniProtKB-UniRule"/>
</dbReference>
<dbReference type="GO" id="GO:0016740">
    <property type="term" value="F:transferase activity"/>
    <property type="evidence" value="ECO:0007669"/>
    <property type="project" value="UniProtKB-ARBA"/>
</dbReference>
<dbReference type="GO" id="GO:0016260">
    <property type="term" value="P:selenocysteine biosynthetic process"/>
    <property type="evidence" value="ECO:0007669"/>
    <property type="project" value="UniProtKB-UniRule"/>
</dbReference>
<dbReference type="GO" id="GO:0006434">
    <property type="term" value="P:seryl-tRNA aminoacylation"/>
    <property type="evidence" value="ECO:0007669"/>
    <property type="project" value="UniProtKB-UniRule"/>
</dbReference>
<dbReference type="CDD" id="cd00770">
    <property type="entry name" value="SerRS_core"/>
    <property type="match status" value="1"/>
</dbReference>
<dbReference type="Gene3D" id="3.30.930.10">
    <property type="entry name" value="Bira Bifunctional Protein, Domain 2"/>
    <property type="match status" value="1"/>
</dbReference>
<dbReference type="Gene3D" id="1.10.287.40">
    <property type="entry name" value="Serine-tRNA synthetase, tRNA binding domain"/>
    <property type="match status" value="1"/>
</dbReference>
<dbReference type="HAMAP" id="MF_00176">
    <property type="entry name" value="Ser_tRNA_synth_type1"/>
    <property type="match status" value="1"/>
</dbReference>
<dbReference type="InterPro" id="IPR002314">
    <property type="entry name" value="aa-tRNA-synt_IIb"/>
</dbReference>
<dbReference type="InterPro" id="IPR006195">
    <property type="entry name" value="aa-tRNA-synth_II"/>
</dbReference>
<dbReference type="InterPro" id="IPR045864">
    <property type="entry name" value="aa-tRNA-synth_II/BPL/LPL"/>
</dbReference>
<dbReference type="InterPro" id="IPR002317">
    <property type="entry name" value="Ser-tRNA-ligase_type_1"/>
</dbReference>
<dbReference type="InterPro" id="IPR015866">
    <property type="entry name" value="Ser-tRNA-synth_1_N"/>
</dbReference>
<dbReference type="InterPro" id="IPR042103">
    <property type="entry name" value="SerRS_1_N_sf"/>
</dbReference>
<dbReference type="InterPro" id="IPR033729">
    <property type="entry name" value="SerRS_core"/>
</dbReference>
<dbReference type="InterPro" id="IPR010978">
    <property type="entry name" value="tRNA-bd_arm"/>
</dbReference>
<dbReference type="NCBIfam" id="TIGR00414">
    <property type="entry name" value="serS"/>
    <property type="match status" value="1"/>
</dbReference>
<dbReference type="PANTHER" id="PTHR43697:SF1">
    <property type="entry name" value="SERINE--TRNA LIGASE"/>
    <property type="match status" value="1"/>
</dbReference>
<dbReference type="PANTHER" id="PTHR43697">
    <property type="entry name" value="SERYL-TRNA SYNTHETASE"/>
    <property type="match status" value="1"/>
</dbReference>
<dbReference type="Pfam" id="PF02403">
    <property type="entry name" value="Seryl_tRNA_N"/>
    <property type="match status" value="1"/>
</dbReference>
<dbReference type="Pfam" id="PF00587">
    <property type="entry name" value="tRNA-synt_2b"/>
    <property type="match status" value="1"/>
</dbReference>
<dbReference type="PIRSF" id="PIRSF001529">
    <property type="entry name" value="Ser-tRNA-synth_IIa"/>
    <property type="match status" value="1"/>
</dbReference>
<dbReference type="PRINTS" id="PR00981">
    <property type="entry name" value="TRNASYNTHSER"/>
</dbReference>
<dbReference type="SUPFAM" id="SSF55681">
    <property type="entry name" value="Class II aaRS and biotin synthetases"/>
    <property type="match status" value="1"/>
</dbReference>
<dbReference type="SUPFAM" id="SSF46589">
    <property type="entry name" value="tRNA-binding arm"/>
    <property type="match status" value="1"/>
</dbReference>
<dbReference type="PROSITE" id="PS50862">
    <property type="entry name" value="AA_TRNA_LIGASE_II"/>
    <property type="match status" value="1"/>
</dbReference>
<gene>
    <name evidence="1" type="primary">serS</name>
    <name type="ordered locus">SPD_0375</name>
</gene>
<protein>
    <recommendedName>
        <fullName evidence="1">Serine--tRNA ligase</fullName>
        <ecNumber evidence="1">6.1.1.11</ecNumber>
    </recommendedName>
    <alternativeName>
        <fullName evidence="1">Seryl-tRNA synthetase</fullName>
        <shortName evidence="1">SerRS</shortName>
    </alternativeName>
    <alternativeName>
        <fullName evidence="1">Seryl-tRNA(Ser/Sec) synthetase</fullName>
    </alternativeName>
</protein>
<accession>Q04M63</accession>
<evidence type="ECO:0000255" key="1">
    <source>
        <dbReference type="HAMAP-Rule" id="MF_00176"/>
    </source>
</evidence>
<comment type="function">
    <text evidence="1">Catalyzes the attachment of serine to tRNA(Ser). Is also able to aminoacylate tRNA(Sec) with serine, to form the misacylated tRNA L-seryl-tRNA(Sec), which will be further converted into selenocysteinyl-tRNA(Sec).</text>
</comment>
<comment type="catalytic activity">
    <reaction evidence="1">
        <text>tRNA(Ser) + L-serine + ATP = L-seryl-tRNA(Ser) + AMP + diphosphate + H(+)</text>
        <dbReference type="Rhea" id="RHEA:12292"/>
        <dbReference type="Rhea" id="RHEA-COMP:9669"/>
        <dbReference type="Rhea" id="RHEA-COMP:9703"/>
        <dbReference type="ChEBI" id="CHEBI:15378"/>
        <dbReference type="ChEBI" id="CHEBI:30616"/>
        <dbReference type="ChEBI" id="CHEBI:33019"/>
        <dbReference type="ChEBI" id="CHEBI:33384"/>
        <dbReference type="ChEBI" id="CHEBI:78442"/>
        <dbReference type="ChEBI" id="CHEBI:78533"/>
        <dbReference type="ChEBI" id="CHEBI:456215"/>
        <dbReference type="EC" id="6.1.1.11"/>
    </reaction>
</comment>
<comment type="catalytic activity">
    <reaction evidence="1">
        <text>tRNA(Sec) + L-serine + ATP = L-seryl-tRNA(Sec) + AMP + diphosphate + H(+)</text>
        <dbReference type="Rhea" id="RHEA:42580"/>
        <dbReference type="Rhea" id="RHEA-COMP:9742"/>
        <dbReference type="Rhea" id="RHEA-COMP:10128"/>
        <dbReference type="ChEBI" id="CHEBI:15378"/>
        <dbReference type="ChEBI" id="CHEBI:30616"/>
        <dbReference type="ChEBI" id="CHEBI:33019"/>
        <dbReference type="ChEBI" id="CHEBI:33384"/>
        <dbReference type="ChEBI" id="CHEBI:78442"/>
        <dbReference type="ChEBI" id="CHEBI:78533"/>
        <dbReference type="ChEBI" id="CHEBI:456215"/>
        <dbReference type="EC" id="6.1.1.11"/>
    </reaction>
</comment>
<comment type="pathway">
    <text evidence="1">Aminoacyl-tRNA biosynthesis; selenocysteinyl-tRNA(Sec) biosynthesis; L-seryl-tRNA(Sec) from L-serine and tRNA(Sec): step 1/1.</text>
</comment>
<comment type="subunit">
    <text evidence="1">Homodimer. The tRNA molecule binds across the dimer.</text>
</comment>
<comment type="subcellular location">
    <subcellularLocation>
        <location evidence="1">Cytoplasm</location>
    </subcellularLocation>
</comment>
<comment type="domain">
    <text evidence="1">Consists of two distinct domains, a catalytic core and a N-terminal extension that is involved in tRNA binding.</text>
</comment>
<comment type="similarity">
    <text evidence="1">Belongs to the class-II aminoacyl-tRNA synthetase family. Type-1 seryl-tRNA synthetase subfamily.</text>
</comment>
<name>SYS_STRP2</name>